<gene>
    <name evidence="1" type="primary">obg</name>
    <name type="ordered locus">MG384</name>
</gene>
<proteinExistence type="inferred from homology"/>
<dbReference type="EC" id="3.6.5.-" evidence="1"/>
<dbReference type="EMBL" id="L43967">
    <property type="protein sequence ID" value="AAC71611.1"/>
    <property type="molecule type" value="Genomic_DNA"/>
</dbReference>
<dbReference type="PIR" id="E64242">
    <property type="entry name" value="E64242"/>
</dbReference>
<dbReference type="RefSeq" id="WP_009885945.1">
    <property type="nucleotide sequence ID" value="NC_000908.2"/>
</dbReference>
<dbReference type="SMR" id="P47624"/>
<dbReference type="FunCoup" id="P47624">
    <property type="interactions" value="181"/>
</dbReference>
<dbReference type="STRING" id="243273.MG_384"/>
<dbReference type="GeneID" id="88282568"/>
<dbReference type="KEGG" id="mge:MG_384"/>
<dbReference type="eggNOG" id="COG0536">
    <property type="taxonomic scope" value="Bacteria"/>
</dbReference>
<dbReference type="HOGENOM" id="CLU_011747_2_1_14"/>
<dbReference type="InParanoid" id="P47624"/>
<dbReference type="OrthoDB" id="9807318at2"/>
<dbReference type="BioCyc" id="MGEN243273:G1GJ2-479-MONOMER"/>
<dbReference type="Proteomes" id="UP000000807">
    <property type="component" value="Chromosome"/>
</dbReference>
<dbReference type="GO" id="GO:0005737">
    <property type="term" value="C:cytoplasm"/>
    <property type="evidence" value="ECO:0007669"/>
    <property type="project" value="UniProtKB-SubCell"/>
</dbReference>
<dbReference type="GO" id="GO:0005525">
    <property type="term" value="F:GTP binding"/>
    <property type="evidence" value="ECO:0000318"/>
    <property type="project" value="GO_Central"/>
</dbReference>
<dbReference type="GO" id="GO:0003924">
    <property type="term" value="F:GTPase activity"/>
    <property type="evidence" value="ECO:0000318"/>
    <property type="project" value="GO_Central"/>
</dbReference>
<dbReference type="GO" id="GO:0000287">
    <property type="term" value="F:magnesium ion binding"/>
    <property type="evidence" value="ECO:0007669"/>
    <property type="project" value="InterPro"/>
</dbReference>
<dbReference type="GO" id="GO:0042254">
    <property type="term" value="P:ribosome biogenesis"/>
    <property type="evidence" value="ECO:0007669"/>
    <property type="project" value="UniProtKB-UniRule"/>
</dbReference>
<dbReference type="CDD" id="cd01898">
    <property type="entry name" value="Obg"/>
    <property type="match status" value="1"/>
</dbReference>
<dbReference type="FunFam" id="2.70.210.12:FF:000001">
    <property type="entry name" value="GTPase Obg"/>
    <property type="match status" value="1"/>
</dbReference>
<dbReference type="Gene3D" id="3.30.300.350">
    <property type="entry name" value="GTP-binding protein OBG, C-terminal domain"/>
    <property type="match status" value="1"/>
</dbReference>
<dbReference type="Gene3D" id="2.70.210.12">
    <property type="entry name" value="GTP1/OBG domain"/>
    <property type="match status" value="1"/>
</dbReference>
<dbReference type="Gene3D" id="3.40.50.300">
    <property type="entry name" value="P-loop containing nucleotide triphosphate hydrolases"/>
    <property type="match status" value="1"/>
</dbReference>
<dbReference type="HAMAP" id="MF_01454">
    <property type="entry name" value="GTPase_Obg"/>
    <property type="match status" value="1"/>
</dbReference>
<dbReference type="InterPro" id="IPR031167">
    <property type="entry name" value="G_OBG"/>
</dbReference>
<dbReference type="InterPro" id="IPR006073">
    <property type="entry name" value="GTP-bd"/>
</dbReference>
<dbReference type="InterPro" id="IPR014100">
    <property type="entry name" value="GTP-bd_Obg/CgtA"/>
</dbReference>
<dbReference type="InterPro" id="IPR036346">
    <property type="entry name" value="GTP-bd_prot_GTP1/OBG_C_sf"/>
</dbReference>
<dbReference type="InterPro" id="IPR006074">
    <property type="entry name" value="GTP1-OBG_CS"/>
</dbReference>
<dbReference type="InterPro" id="IPR006169">
    <property type="entry name" value="GTP1_OBG_dom"/>
</dbReference>
<dbReference type="InterPro" id="IPR036726">
    <property type="entry name" value="GTP1_OBG_dom_sf"/>
</dbReference>
<dbReference type="InterPro" id="IPR045086">
    <property type="entry name" value="OBG_GTPase"/>
</dbReference>
<dbReference type="InterPro" id="IPR015349">
    <property type="entry name" value="OCT_dom"/>
</dbReference>
<dbReference type="InterPro" id="IPR027417">
    <property type="entry name" value="P-loop_NTPase"/>
</dbReference>
<dbReference type="InterPro" id="IPR005225">
    <property type="entry name" value="Small_GTP-bd"/>
</dbReference>
<dbReference type="NCBIfam" id="TIGR02729">
    <property type="entry name" value="Obg_CgtA"/>
    <property type="match status" value="1"/>
</dbReference>
<dbReference type="NCBIfam" id="TIGR03595">
    <property type="entry name" value="Obg_CgtA_exten"/>
    <property type="match status" value="1"/>
</dbReference>
<dbReference type="NCBIfam" id="NF008955">
    <property type="entry name" value="PRK12297.1"/>
    <property type="match status" value="1"/>
</dbReference>
<dbReference type="NCBIfam" id="NF008956">
    <property type="entry name" value="PRK12299.1"/>
    <property type="match status" value="1"/>
</dbReference>
<dbReference type="NCBIfam" id="TIGR00231">
    <property type="entry name" value="small_GTP"/>
    <property type="match status" value="1"/>
</dbReference>
<dbReference type="PANTHER" id="PTHR11702">
    <property type="entry name" value="DEVELOPMENTALLY REGULATED GTP-BINDING PROTEIN-RELATED"/>
    <property type="match status" value="1"/>
</dbReference>
<dbReference type="PANTHER" id="PTHR11702:SF31">
    <property type="entry name" value="MITOCHONDRIAL RIBOSOME-ASSOCIATED GTPASE 2"/>
    <property type="match status" value="1"/>
</dbReference>
<dbReference type="Pfam" id="PF09269">
    <property type="entry name" value="DUF1967"/>
    <property type="match status" value="1"/>
</dbReference>
<dbReference type="Pfam" id="PF01018">
    <property type="entry name" value="GTP1_OBG"/>
    <property type="match status" value="1"/>
</dbReference>
<dbReference type="Pfam" id="PF01926">
    <property type="entry name" value="MMR_HSR1"/>
    <property type="match status" value="1"/>
</dbReference>
<dbReference type="PIRSF" id="PIRSF002401">
    <property type="entry name" value="GTP_bd_Obg/CgtA"/>
    <property type="match status" value="1"/>
</dbReference>
<dbReference type="PRINTS" id="PR00326">
    <property type="entry name" value="GTP1OBG"/>
</dbReference>
<dbReference type="SUPFAM" id="SSF102741">
    <property type="entry name" value="Obg GTP-binding protein C-terminal domain"/>
    <property type="match status" value="1"/>
</dbReference>
<dbReference type="SUPFAM" id="SSF82051">
    <property type="entry name" value="Obg GTP-binding protein N-terminal domain"/>
    <property type="match status" value="1"/>
</dbReference>
<dbReference type="SUPFAM" id="SSF52540">
    <property type="entry name" value="P-loop containing nucleoside triphosphate hydrolases"/>
    <property type="match status" value="1"/>
</dbReference>
<dbReference type="PROSITE" id="PS51710">
    <property type="entry name" value="G_OBG"/>
    <property type="match status" value="1"/>
</dbReference>
<dbReference type="PROSITE" id="PS00905">
    <property type="entry name" value="GTP1_OBG"/>
    <property type="match status" value="1"/>
</dbReference>
<dbReference type="PROSITE" id="PS51883">
    <property type="entry name" value="OBG"/>
    <property type="match status" value="1"/>
</dbReference>
<dbReference type="PROSITE" id="PS51881">
    <property type="entry name" value="OCT"/>
    <property type="match status" value="1"/>
</dbReference>
<protein>
    <recommendedName>
        <fullName evidence="1">GTPase Obg</fullName>
        <ecNumber evidence="1">3.6.5.-</ecNumber>
    </recommendedName>
    <alternativeName>
        <fullName evidence="1">GTP-binding protein Obg</fullName>
    </alternativeName>
</protein>
<organism>
    <name type="scientific">Mycoplasma genitalium (strain ATCC 33530 / DSM 19775 / NCTC 10195 / G37)</name>
    <name type="common">Mycoplasmoides genitalium</name>
    <dbReference type="NCBI Taxonomy" id="243273"/>
    <lineage>
        <taxon>Bacteria</taxon>
        <taxon>Bacillati</taxon>
        <taxon>Mycoplasmatota</taxon>
        <taxon>Mycoplasmoidales</taxon>
        <taxon>Mycoplasmoidaceae</taxon>
        <taxon>Mycoplasmoides</taxon>
    </lineage>
</organism>
<sequence>MAITDYCECRFTAGNGGNGIIAWKREAHYDKGGPGGGNGGNGGNVILQADHNCDSLFFLKNKKHLFAEDGQNGKPDLAHGKNGSDLLIKVPIGTTVKNLENNSVLVDFVHDKQSFILCFGGKGGKGNAAFKSPIMRAPNLYENGDKGEILNVSLEVKYLANVGIVGFPNSGKSTLISKLSNAKPKIANYRFTTLIPVLGVVKYQNNSLVFADIPGLIENASEGSGLGHDFLRHIERCEILIHLISLDPVDNDDPCKAYLQIMDELSKYSPLLVKKKMLVVANKIDVNEGEKRFKKLEKFLQKKSISVLKISALKKELGNLLDRVFELYNKTISQFGANKFSLPMELEKHYVFQNTNENNNDPLNIEKDSLNRWIVNCKRLRYWFDKIPQTTLDNIRRLGNKIKEIGIEDQLKSVGAKKGDIIFFDGCEFVIND</sequence>
<evidence type="ECO:0000255" key="1">
    <source>
        <dbReference type="HAMAP-Rule" id="MF_01454"/>
    </source>
</evidence>
<evidence type="ECO:0000255" key="2">
    <source>
        <dbReference type="PROSITE-ProRule" id="PRU01229"/>
    </source>
</evidence>
<evidence type="ECO:0000255" key="3">
    <source>
        <dbReference type="PROSITE-ProRule" id="PRU01231"/>
    </source>
</evidence>
<name>OBG_MYCGE</name>
<accession>P47624</accession>
<comment type="function">
    <text evidence="1">An essential GTPase which binds GTP, GDP and possibly (p)ppGpp with moderate affinity, with high nucleotide exchange rates and a fairly low GTP hydrolysis rate. Plays a role in control of the cell cycle, stress response, ribosome biogenesis and in those bacteria that undergo differentiation, in morphogenesis control.</text>
</comment>
<comment type="cofactor">
    <cofactor evidence="1">
        <name>Mg(2+)</name>
        <dbReference type="ChEBI" id="CHEBI:18420"/>
    </cofactor>
</comment>
<comment type="subunit">
    <text evidence="1">Monomer.</text>
</comment>
<comment type="subcellular location">
    <subcellularLocation>
        <location evidence="1">Cytoplasm</location>
    </subcellularLocation>
</comment>
<comment type="similarity">
    <text evidence="1">Belongs to the TRAFAC class OBG-HflX-like GTPase superfamily. OBG GTPase family.</text>
</comment>
<keyword id="KW-0963">Cytoplasm</keyword>
<keyword id="KW-0342">GTP-binding</keyword>
<keyword id="KW-0378">Hydrolase</keyword>
<keyword id="KW-0460">Magnesium</keyword>
<keyword id="KW-0479">Metal-binding</keyword>
<keyword id="KW-0547">Nucleotide-binding</keyword>
<keyword id="KW-1185">Reference proteome</keyword>
<feature type="chain" id="PRO_0000205441" description="GTPase Obg">
    <location>
        <begin position="1"/>
        <end position="433"/>
    </location>
</feature>
<feature type="domain" description="Obg" evidence="3">
    <location>
        <begin position="1"/>
        <end position="159"/>
    </location>
</feature>
<feature type="domain" description="OBG-type G" evidence="1">
    <location>
        <begin position="160"/>
        <end position="329"/>
    </location>
</feature>
<feature type="domain" description="OCT" evidence="2">
    <location>
        <begin position="355"/>
        <end position="433"/>
    </location>
</feature>
<feature type="binding site" evidence="1">
    <location>
        <begin position="166"/>
        <end position="173"/>
    </location>
    <ligand>
        <name>GTP</name>
        <dbReference type="ChEBI" id="CHEBI:37565"/>
    </ligand>
</feature>
<feature type="binding site" evidence="1">
    <location>
        <position position="173"/>
    </location>
    <ligand>
        <name>Mg(2+)</name>
        <dbReference type="ChEBI" id="CHEBI:18420"/>
    </ligand>
</feature>
<feature type="binding site" evidence="1">
    <location>
        <begin position="191"/>
        <end position="195"/>
    </location>
    <ligand>
        <name>GTP</name>
        <dbReference type="ChEBI" id="CHEBI:37565"/>
    </ligand>
</feature>
<feature type="binding site" evidence="1">
    <location>
        <position position="193"/>
    </location>
    <ligand>
        <name>Mg(2+)</name>
        <dbReference type="ChEBI" id="CHEBI:18420"/>
    </ligand>
</feature>
<feature type="binding site" evidence="1">
    <location>
        <begin position="212"/>
        <end position="215"/>
    </location>
    <ligand>
        <name>GTP</name>
        <dbReference type="ChEBI" id="CHEBI:37565"/>
    </ligand>
</feature>
<feature type="binding site" evidence="1">
    <location>
        <begin position="282"/>
        <end position="285"/>
    </location>
    <ligand>
        <name>GTP</name>
        <dbReference type="ChEBI" id="CHEBI:37565"/>
    </ligand>
</feature>
<feature type="binding site" evidence="1">
    <location>
        <begin position="310"/>
        <end position="312"/>
    </location>
    <ligand>
        <name>GTP</name>
        <dbReference type="ChEBI" id="CHEBI:37565"/>
    </ligand>
</feature>
<reference key="1">
    <citation type="journal article" date="1995" name="Science">
        <title>The minimal gene complement of Mycoplasma genitalium.</title>
        <authorList>
            <person name="Fraser C.M."/>
            <person name="Gocayne J.D."/>
            <person name="White O."/>
            <person name="Adams M.D."/>
            <person name="Clayton R.A."/>
            <person name="Fleischmann R.D."/>
            <person name="Bult C.J."/>
            <person name="Kerlavage A.R."/>
            <person name="Sutton G.G."/>
            <person name="Kelley J.M."/>
            <person name="Fritchman J.L."/>
            <person name="Weidman J.F."/>
            <person name="Small K.V."/>
            <person name="Sandusky M."/>
            <person name="Fuhrmann J.L."/>
            <person name="Nguyen D.T."/>
            <person name="Utterback T.R."/>
            <person name="Saudek D.M."/>
            <person name="Phillips C.A."/>
            <person name="Merrick J.M."/>
            <person name="Tomb J.-F."/>
            <person name="Dougherty B.A."/>
            <person name="Bott K.F."/>
            <person name="Hu P.-C."/>
            <person name="Lucier T.S."/>
            <person name="Peterson S.N."/>
            <person name="Smith H.O."/>
            <person name="Hutchison C.A. III"/>
            <person name="Venter J.C."/>
        </authorList>
    </citation>
    <scope>NUCLEOTIDE SEQUENCE [LARGE SCALE GENOMIC DNA]</scope>
    <source>
        <strain>ATCC 33530 / DSM 19775 / NCTC 10195 / G37</strain>
    </source>
</reference>